<name>PRIB_SHIFL</name>
<feature type="chain" id="PRO_0000199063" description="Replication restart protein PriB">
    <location>
        <begin position="1"/>
        <end position="104"/>
    </location>
</feature>
<feature type="domain" description="SSB" evidence="1">
    <location>
        <begin position="1"/>
        <end position="101"/>
    </location>
</feature>
<accession>P67677</accession>
<accession>Q7UAK4</accession>
<accession>Q8XDI0</accession>
<dbReference type="EMBL" id="AE005674">
    <property type="status" value="NOT_ANNOTATED_CDS"/>
    <property type="molecule type" value="Genomic_DNA"/>
</dbReference>
<dbReference type="EMBL" id="AE014073">
    <property type="protein sequence ID" value="AAP19555.1"/>
    <property type="status" value="ALT_INIT"/>
    <property type="molecule type" value="Genomic_DNA"/>
</dbReference>
<dbReference type="RefSeq" id="WP_001296681.1">
    <property type="nucleotide sequence ID" value="NZ_WPGW01000113.1"/>
</dbReference>
<dbReference type="SMR" id="P67677"/>
<dbReference type="GeneID" id="93777622"/>
<dbReference type="KEGG" id="sfx:S4626"/>
<dbReference type="PATRIC" id="fig|623.156.peg.2941"/>
<dbReference type="HOGENOM" id="CLU_166075_0_0_6"/>
<dbReference type="Proteomes" id="UP000001006">
    <property type="component" value="Chromosome"/>
</dbReference>
<dbReference type="Proteomes" id="UP000002673">
    <property type="component" value="Chromosome"/>
</dbReference>
<dbReference type="GO" id="GO:1990077">
    <property type="term" value="C:primosome complex"/>
    <property type="evidence" value="ECO:0007669"/>
    <property type="project" value="UniProtKB-KW"/>
</dbReference>
<dbReference type="GO" id="GO:0003697">
    <property type="term" value="F:single-stranded DNA binding"/>
    <property type="evidence" value="ECO:0007669"/>
    <property type="project" value="UniProtKB-UniRule"/>
</dbReference>
<dbReference type="GO" id="GO:0006269">
    <property type="term" value="P:DNA replication, synthesis of primer"/>
    <property type="evidence" value="ECO:0007669"/>
    <property type="project" value="UniProtKB-KW"/>
</dbReference>
<dbReference type="CDD" id="cd04496">
    <property type="entry name" value="SSB_OBF"/>
    <property type="match status" value="1"/>
</dbReference>
<dbReference type="FunFam" id="2.40.50.140:FF:000077">
    <property type="entry name" value="Primosomal replication protein N"/>
    <property type="match status" value="1"/>
</dbReference>
<dbReference type="Gene3D" id="2.40.50.140">
    <property type="entry name" value="Nucleic acid-binding proteins"/>
    <property type="match status" value="1"/>
</dbReference>
<dbReference type="HAMAP" id="MF_00720">
    <property type="entry name" value="PriB"/>
    <property type="match status" value="1"/>
</dbReference>
<dbReference type="InterPro" id="IPR012340">
    <property type="entry name" value="NA-bd_OB-fold"/>
</dbReference>
<dbReference type="InterPro" id="IPR000424">
    <property type="entry name" value="Primosome_PriB/ssb"/>
</dbReference>
<dbReference type="InterPro" id="IPR023646">
    <property type="entry name" value="Prisomal_replication_PriB"/>
</dbReference>
<dbReference type="NCBIfam" id="TIGR04418">
    <property type="entry name" value="PriB_gamma"/>
    <property type="match status" value="1"/>
</dbReference>
<dbReference type="Pfam" id="PF22657">
    <property type="entry name" value="SSB_1"/>
    <property type="match status" value="1"/>
</dbReference>
<dbReference type="PIRSF" id="PIRSF003135">
    <property type="entry name" value="Primosomal_n"/>
    <property type="match status" value="1"/>
</dbReference>
<dbReference type="SUPFAM" id="SSF50249">
    <property type="entry name" value="Nucleic acid-binding proteins"/>
    <property type="match status" value="1"/>
</dbReference>
<dbReference type="PROSITE" id="PS50935">
    <property type="entry name" value="SSB"/>
    <property type="match status" value="1"/>
</dbReference>
<gene>
    <name evidence="1" type="primary">priB</name>
    <name type="ordered locus">SF4354.1</name>
    <name type="ordered locus">S4626</name>
</gene>
<protein>
    <recommendedName>
        <fullName evidence="1">Replication restart protein PriB</fullName>
    </recommendedName>
</protein>
<comment type="function">
    <text evidence="1">Involved in the restart of stalled replication forks, which reloads the replicative helicase on sites other than the origin of replication; the PriA-PriB pathway is the major replication restart pathway. During primosome assembly it facilitates complex formation between PriA and DnaT on DNA; stabilizes PriA on DNA. Stimulates the DNA unwinding activity of PriA helicase.</text>
</comment>
<comment type="subunit">
    <text evidence="1">Homodimer. Interacts with PriA and DnaT. Component of the replication restart primosome. Primosome assembly occurs via a 'hand-off' mechanism. PriA binds to replication forks, subsequently PriB then DnaT bind; DnaT then displaces ssDNA to generate the helicase loading substrate.</text>
</comment>
<comment type="similarity">
    <text evidence="1">Belongs to the PriB family.</text>
</comment>
<comment type="sequence caution" evidence="2">
    <conflict type="erroneous initiation">
        <sequence resource="EMBL-CDS" id="AAP19555"/>
    </conflict>
</comment>
<keyword id="KW-0235">DNA replication</keyword>
<keyword id="KW-0238">DNA-binding</keyword>
<keyword id="KW-0639">Primosome</keyword>
<keyword id="KW-1185">Reference proteome</keyword>
<organism>
    <name type="scientific">Shigella flexneri</name>
    <dbReference type="NCBI Taxonomy" id="623"/>
    <lineage>
        <taxon>Bacteria</taxon>
        <taxon>Pseudomonadati</taxon>
        <taxon>Pseudomonadota</taxon>
        <taxon>Gammaproteobacteria</taxon>
        <taxon>Enterobacterales</taxon>
        <taxon>Enterobacteriaceae</taxon>
        <taxon>Shigella</taxon>
    </lineage>
</organism>
<reference key="1">
    <citation type="journal article" date="2002" name="Nucleic Acids Res.">
        <title>Genome sequence of Shigella flexneri 2a: insights into pathogenicity through comparison with genomes of Escherichia coli K12 and O157.</title>
        <authorList>
            <person name="Jin Q."/>
            <person name="Yuan Z."/>
            <person name="Xu J."/>
            <person name="Wang Y."/>
            <person name="Shen Y."/>
            <person name="Lu W."/>
            <person name="Wang J."/>
            <person name="Liu H."/>
            <person name="Yang J."/>
            <person name="Yang F."/>
            <person name="Zhang X."/>
            <person name="Zhang J."/>
            <person name="Yang G."/>
            <person name="Wu H."/>
            <person name="Qu D."/>
            <person name="Dong J."/>
            <person name="Sun L."/>
            <person name="Xue Y."/>
            <person name="Zhao A."/>
            <person name="Gao Y."/>
            <person name="Zhu J."/>
            <person name="Kan B."/>
            <person name="Ding K."/>
            <person name="Chen S."/>
            <person name="Cheng H."/>
            <person name="Yao Z."/>
            <person name="He B."/>
            <person name="Chen R."/>
            <person name="Ma D."/>
            <person name="Qiang B."/>
            <person name="Wen Y."/>
            <person name="Hou Y."/>
            <person name="Yu J."/>
        </authorList>
    </citation>
    <scope>NUCLEOTIDE SEQUENCE [LARGE SCALE GENOMIC DNA]</scope>
    <source>
        <strain>301 / Serotype 2a</strain>
    </source>
</reference>
<reference key="2">
    <citation type="journal article" date="2003" name="Infect. Immun.">
        <title>Complete genome sequence and comparative genomics of Shigella flexneri serotype 2a strain 2457T.</title>
        <authorList>
            <person name="Wei J."/>
            <person name="Goldberg M.B."/>
            <person name="Burland V."/>
            <person name="Venkatesan M.M."/>
            <person name="Deng W."/>
            <person name="Fournier G."/>
            <person name="Mayhew G.F."/>
            <person name="Plunkett G. III"/>
            <person name="Rose D.J."/>
            <person name="Darling A."/>
            <person name="Mau B."/>
            <person name="Perna N.T."/>
            <person name="Payne S.M."/>
            <person name="Runyen-Janecky L.J."/>
            <person name="Zhou S."/>
            <person name="Schwartz D.C."/>
            <person name="Blattner F.R."/>
        </authorList>
    </citation>
    <scope>NUCLEOTIDE SEQUENCE [LARGE SCALE GENOMIC DNA]</scope>
    <source>
        <strain>ATCC 700930 / 2457T / Serotype 2a</strain>
    </source>
</reference>
<sequence length="104" mass="11472">MTNRLVLSGTVCRTPLRKVSPSGIPHCQFVLEHRSVQEEAGFHRQAWCQMPVIVSGHENQAITHSITVGSRITVQGFISCHKAKNGLSKMVLHAEQIELIDSGD</sequence>
<evidence type="ECO:0000255" key="1">
    <source>
        <dbReference type="HAMAP-Rule" id="MF_00720"/>
    </source>
</evidence>
<evidence type="ECO:0000305" key="2"/>
<proteinExistence type="inferred from homology"/>